<accession>Q97BP2</accession>
<gene>
    <name evidence="1" type="primary">eif2a</name>
    <name type="ordered locus">TV0413</name>
    <name type="ORF">TVG0401470</name>
</gene>
<feature type="chain" id="PRO_0000137405" description="Translation initiation factor 2 subunit alpha">
    <location>
        <begin position="1"/>
        <end position="254"/>
    </location>
</feature>
<feature type="domain" description="S1 motif" evidence="1">
    <location>
        <begin position="10"/>
        <end position="81"/>
    </location>
</feature>
<organism>
    <name type="scientific">Thermoplasma volcanium (strain ATCC 51530 / DSM 4299 / JCM 9571 / NBRC 15438 / GSS1)</name>
    <dbReference type="NCBI Taxonomy" id="273116"/>
    <lineage>
        <taxon>Archaea</taxon>
        <taxon>Methanobacteriati</taxon>
        <taxon>Thermoplasmatota</taxon>
        <taxon>Thermoplasmata</taxon>
        <taxon>Thermoplasmatales</taxon>
        <taxon>Thermoplasmataceae</taxon>
        <taxon>Thermoplasma</taxon>
    </lineage>
</organism>
<evidence type="ECO:0000255" key="1">
    <source>
        <dbReference type="HAMAP-Rule" id="MF_00231"/>
    </source>
</evidence>
<dbReference type="EMBL" id="BA000011">
    <property type="protein sequence ID" value="BAB59555.1"/>
    <property type="molecule type" value="Genomic_DNA"/>
</dbReference>
<dbReference type="RefSeq" id="WP_010916670.1">
    <property type="nucleotide sequence ID" value="NC_002689.2"/>
</dbReference>
<dbReference type="SMR" id="Q97BP2"/>
<dbReference type="STRING" id="273116.gene:9381191"/>
<dbReference type="PaxDb" id="273116-14324628"/>
<dbReference type="GeneID" id="1440928"/>
<dbReference type="KEGG" id="tvo:TVG0401470"/>
<dbReference type="eggNOG" id="arCOG04107">
    <property type="taxonomic scope" value="Archaea"/>
</dbReference>
<dbReference type="HOGENOM" id="CLU_033458_0_2_2"/>
<dbReference type="OrthoDB" id="84794at2157"/>
<dbReference type="PhylomeDB" id="Q97BP2"/>
<dbReference type="Proteomes" id="UP000001017">
    <property type="component" value="Chromosome"/>
</dbReference>
<dbReference type="GO" id="GO:0043022">
    <property type="term" value="F:ribosome binding"/>
    <property type="evidence" value="ECO:0007669"/>
    <property type="project" value="TreeGrafter"/>
</dbReference>
<dbReference type="GO" id="GO:0003723">
    <property type="term" value="F:RNA binding"/>
    <property type="evidence" value="ECO:0007669"/>
    <property type="project" value="UniProtKB-UniRule"/>
</dbReference>
<dbReference type="GO" id="GO:0003743">
    <property type="term" value="F:translation initiation factor activity"/>
    <property type="evidence" value="ECO:0007669"/>
    <property type="project" value="UniProtKB-UniRule"/>
</dbReference>
<dbReference type="CDD" id="cd04452">
    <property type="entry name" value="S1_IF2_alpha"/>
    <property type="match status" value="1"/>
</dbReference>
<dbReference type="Gene3D" id="3.30.70.1130">
    <property type="entry name" value="EIF_2_alpha"/>
    <property type="match status" value="1"/>
</dbReference>
<dbReference type="Gene3D" id="2.40.50.140">
    <property type="entry name" value="Nucleic acid-binding proteins"/>
    <property type="match status" value="1"/>
</dbReference>
<dbReference type="Gene3D" id="1.10.150.190">
    <property type="entry name" value="Translation initiation factor 2, subunit 1, domain 2"/>
    <property type="match status" value="1"/>
</dbReference>
<dbReference type="HAMAP" id="MF_00231">
    <property type="entry name" value="eIF_2_alpha"/>
    <property type="match status" value="1"/>
</dbReference>
<dbReference type="InterPro" id="IPR012340">
    <property type="entry name" value="NA-bd_OB-fold"/>
</dbReference>
<dbReference type="InterPro" id="IPR003029">
    <property type="entry name" value="S1_domain"/>
</dbReference>
<dbReference type="InterPro" id="IPR044126">
    <property type="entry name" value="S1_IF2_alpha"/>
</dbReference>
<dbReference type="InterPro" id="IPR022964">
    <property type="entry name" value="TIF2_asu_arc"/>
</dbReference>
<dbReference type="InterPro" id="IPR024055">
    <property type="entry name" value="TIF2_asu_C"/>
</dbReference>
<dbReference type="InterPro" id="IPR024054">
    <property type="entry name" value="TIF2_asu_middle_sf"/>
</dbReference>
<dbReference type="InterPro" id="IPR011488">
    <property type="entry name" value="TIF_2_asu"/>
</dbReference>
<dbReference type="NCBIfam" id="NF003062">
    <property type="entry name" value="PRK03987.1-1"/>
    <property type="match status" value="1"/>
</dbReference>
<dbReference type="NCBIfam" id="NF003064">
    <property type="entry name" value="PRK03987.1-4"/>
    <property type="match status" value="1"/>
</dbReference>
<dbReference type="PANTHER" id="PTHR10602">
    <property type="entry name" value="EUKARYOTIC TRANSLATION INITIATION FACTOR 2 SUBUNIT 1"/>
    <property type="match status" value="1"/>
</dbReference>
<dbReference type="PANTHER" id="PTHR10602:SF0">
    <property type="entry name" value="EUKARYOTIC TRANSLATION INITIATION FACTOR 2 SUBUNIT 1"/>
    <property type="match status" value="1"/>
</dbReference>
<dbReference type="Pfam" id="PF07541">
    <property type="entry name" value="EIF_2_alpha"/>
    <property type="match status" value="1"/>
</dbReference>
<dbReference type="Pfam" id="PF00575">
    <property type="entry name" value="S1"/>
    <property type="match status" value="1"/>
</dbReference>
<dbReference type="SMART" id="SM00316">
    <property type="entry name" value="S1"/>
    <property type="match status" value="1"/>
</dbReference>
<dbReference type="SUPFAM" id="SSF110993">
    <property type="entry name" value="eIF-2-alpha, C-terminal domain"/>
    <property type="match status" value="1"/>
</dbReference>
<dbReference type="SUPFAM" id="SSF116742">
    <property type="entry name" value="eIF2alpha middle domain-like"/>
    <property type="match status" value="1"/>
</dbReference>
<dbReference type="SUPFAM" id="SSF50249">
    <property type="entry name" value="Nucleic acid-binding proteins"/>
    <property type="match status" value="1"/>
</dbReference>
<dbReference type="PROSITE" id="PS50126">
    <property type="entry name" value="S1"/>
    <property type="match status" value="1"/>
</dbReference>
<name>IF2A_THEVO</name>
<proteinExistence type="inferred from homology"/>
<protein>
    <recommendedName>
        <fullName evidence="1">Translation initiation factor 2 subunit alpha</fullName>
    </recommendedName>
    <alternativeName>
        <fullName evidence="1">aIF2-alpha</fullName>
    </alternativeName>
    <alternativeName>
        <fullName evidence="1">eIF-2-alpha</fullName>
    </alternativeName>
</protein>
<keyword id="KW-0396">Initiation factor</keyword>
<keyword id="KW-0648">Protein biosynthesis</keyword>
<keyword id="KW-0694">RNA-binding</keyword>
<reference key="1">
    <citation type="journal article" date="2000" name="Proc. Natl. Acad. Sci. U.S.A.">
        <title>Archaeal adaptation to higher temperatures revealed by genomic sequence of Thermoplasma volcanium.</title>
        <authorList>
            <person name="Kawashima T."/>
            <person name="Amano N."/>
            <person name="Koike H."/>
            <person name="Makino S."/>
            <person name="Higuchi S."/>
            <person name="Kawashima-Ohya Y."/>
            <person name="Watanabe K."/>
            <person name="Yamazaki M."/>
            <person name="Kanehori K."/>
            <person name="Kawamoto T."/>
            <person name="Nunoshiba T."/>
            <person name="Yamamoto Y."/>
            <person name="Aramaki H."/>
            <person name="Makino K."/>
            <person name="Suzuki M."/>
        </authorList>
    </citation>
    <scope>NUCLEOTIDE SEQUENCE [LARGE SCALE GENOMIC DNA]</scope>
    <source>
        <strain>ATCC 51530 / DSM 4299 / JCM 9571 / NBRC 15438 / GSS1</strain>
    </source>
</reference>
<sequence>MNIKLLPEVGDLVVVKITEVKNFGANGILEEYPGVEGYIHISEVATGWVKHIRSYLREGQRVVCKVINVNQERKNVDLSLKRVNQHQSREKIAEWKNEQKADKLFEIVCSKLNKDLEACKKEFGVRLVELYGTLFAAFESAAAAEGEWLPDINGDWKDTFVEVAKENITIPEVSVAGYFEAYSLASDGVEKIKEVLTIPPEIGKAELEYVGAPRYRIVVRDKDYKKAEETLKKIVQSVTDKAKKLQVELEFSRQ</sequence>
<comment type="function">
    <text evidence="1">eIF-2 functions in the early steps of protein synthesis by forming a ternary complex with GTP and initiator tRNA.</text>
</comment>
<comment type="subunit">
    <text evidence="1">Heterotrimer composed of an alpha, a beta and a gamma chain.</text>
</comment>
<comment type="similarity">
    <text evidence="1">Belongs to the eIF-2-alpha family.</text>
</comment>